<comment type="function">
    <text evidence="1">Catalyzes the NAD-dependent reduction of succinylglutamate semialdehyde into succinylglutamate.</text>
</comment>
<comment type="catalytic activity">
    <reaction evidence="1">
        <text>N-succinyl-L-glutamate 5-semialdehyde + NAD(+) + H2O = N-succinyl-L-glutamate + NADH + 2 H(+)</text>
        <dbReference type="Rhea" id="RHEA:10812"/>
        <dbReference type="ChEBI" id="CHEBI:15377"/>
        <dbReference type="ChEBI" id="CHEBI:15378"/>
        <dbReference type="ChEBI" id="CHEBI:57540"/>
        <dbReference type="ChEBI" id="CHEBI:57945"/>
        <dbReference type="ChEBI" id="CHEBI:58520"/>
        <dbReference type="ChEBI" id="CHEBI:58763"/>
        <dbReference type="EC" id="1.2.1.71"/>
    </reaction>
</comment>
<comment type="pathway">
    <text evidence="1">Amino-acid degradation; L-arginine degradation via AST pathway; L-glutamate and succinate from L-arginine: step 4/5.</text>
</comment>
<comment type="similarity">
    <text evidence="1">Belongs to the aldehyde dehydrogenase family. AstD subfamily.</text>
</comment>
<name>ASTD_VIBPA</name>
<proteinExistence type="inferred from homology"/>
<dbReference type="EC" id="1.2.1.71" evidence="1"/>
<dbReference type="EMBL" id="BA000031">
    <property type="protein sequence ID" value="BAC61058.1"/>
    <property type="molecule type" value="Genomic_DNA"/>
</dbReference>
<dbReference type="RefSeq" id="NP_799174.1">
    <property type="nucleotide sequence ID" value="NC_004603.1"/>
</dbReference>
<dbReference type="RefSeq" id="WP_005480036.1">
    <property type="nucleotide sequence ID" value="NC_004603.1"/>
</dbReference>
<dbReference type="SMR" id="Q87L22"/>
<dbReference type="GeneID" id="1190345"/>
<dbReference type="KEGG" id="vpa:VP2795"/>
<dbReference type="PATRIC" id="fig|223926.6.peg.2689"/>
<dbReference type="eggNOG" id="COG1012">
    <property type="taxonomic scope" value="Bacteria"/>
</dbReference>
<dbReference type="HOGENOM" id="CLU_005391_1_0_6"/>
<dbReference type="UniPathway" id="UPA00185">
    <property type="reaction ID" value="UER00282"/>
</dbReference>
<dbReference type="Proteomes" id="UP000002493">
    <property type="component" value="Chromosome 1"/>
</dbReference>
<dbReference type="GO" id="GO:0043824">
    <property type="term" value="F:succinylglutamate-semialdehyde dehydrogenase activity"/>
    <property type="evidence" value="ECO:0007669"/>
    <property type="project" value="UniProtKB-EC"/>
</dbReference>
<dbReference type="GO" id="GO:0019544">
    <property type="term" value="P:arginine catabolic process to glutamate"/>
    <property type="evidence" value="ECO:0007669"/>
    <property type="project" value="UniProtKB-UniRule"/>
</dbReference>
<dbReference type="GO" id="GO:0019545">
    <property type="term" value="P:arginine catabolic process to succinate"/>
    <property type="evidence" value="ECO:0007669"/>
    <property type="project" value="UniProtKB-UniRule"/>
</dbReference>
<dbReference type="CDD" id="cd07095">
    <property type="entry name" value="ALDH_SGSD_AstD"/>
    <property type="match status" value="1"/>
</dbReference>
<dbReference type="FunFam" id="3.40.605.10:FF:000010">
    <property type="entry name" value="N-succinylglutamate 5-semialdehyde dehydrogenase"/>
    <property type="match status" value="1"/>
</dbReference>
<dbReference type="Gene3D" id="3.40.605.10">
    <property type="entry name" value="Aldehyde Dehydrogenase, Chain A, domain 1"/>
    <property type="match status" value="1"/>
</dbReference>
<dbReference type="Gene3D" id="3.40.309.10">
    <property type="entry name" value="Aldehyde Dehydrogenase, Chain A, domain 2"/>
    <property type="match status" value="1"/>
</dbReference>
<dbReference type="HAMAP" id="MF_01174">
    <property type="entry name" value="Aldedh_AstD"/>
    <property type="match status" value="1"/>
</dbReference>
<dbReference type="InterPro" id="IPR016161">
    <property type="entry name" value="Ald_DH/histidinol_DH"/>
</dbReference>
<dbReference type="InterPro" id="IPR016163">
    <property type="entry name" value="Ald_DH_C"/>
</dbReference>
<dbReference type="InterPro" id="IPR016160">
    <property type="entry name" value="Ald_DH_CS_CYS"/>
</dbReference>
<dbReference type="InterPro" id="IPR029510">
    <property type="entry name" value="Ald_DH_CS_GLU"/>
</dbReference>
<dbReference type="InterPro" id="IPR016162">
    <property type="entry name" value="Ald_DH_N"/>
</dbReference>
<dbReference type="InterPro" id="IPR015590">
    <property type="entry name" value="Aldehyde_DH_dom"/>
</dbReference>
<dbReference type="InterPro" id="IPR017649">
    <property type="entry name" value="SuccinylGlu_semiald_DH_AstD"/>
</dbReference>
<dbReference type="NCBIfam" id="TIGR03240">
    <property type="entry name" value="arg_catab_astD"/>
    <property type="match status" value="1"/>
</dbReference>
<dbReference type="NCBIfam" id="NF006992">
    <property type="entry name" value="PRK09457.1"/>
    <property type="match status" value="1"/>
</dbReference>
<dbReference type="PANTHER" id="PTHR11699">
    <property type="entry name" value="ALDEHYDE DEHYDROGENASE-RELATED"/>
    <property type="match status" value="1"/>
</dbReference>
<dbReference type="Pfam" id="PF00171">
    <property type="entry name" value="Aldedh"/>
    <property type="match status" value="1"/>
</dbReference>
<dbReference type="SUPFAM" id="SSF53720">
    <property type="entry name" value="ALDH-like"/>
    <property type="match status" value="1"/>
</dbReference>
<dbReference type="PROSITE" id="PS00070">
    <property type="entry name" value="ALDEHYDE_DEHYDR_CYS"/>
    <property type="match status" value="1"/>
</dbReference>
<dbReference type="PROSITE" id="PS00687">
    <property type="entry name" value="ALDEHYDE_DEHYDR_GLU"/>
    <property type="match status" value="1"/>
</dbReference>
<gene>
    <name evidence="1" type="primary">astD</name>
    <name type="ordered locus">VP2795</name>
</gene>
<sequence>MTHWIAGEWVQGQGEEFVSLSPYNQEVIWRGNGATAEQVDQAVAAARAAFVEWKKRPFAEREAIVLAFAEKVKENSEKIAEVIAKETGKPIWETRTEAAAMAGKIAISIRAYHDRTGEATREAAGNQIVLRHRPLGVMAVFGPYNFPGHLPNGHIVPALLAGNTVVFKPSEQTPWTGELAMKLWEEAGLPKGVINLVQGAKETGIALADAKGIDGILFTGSANTGHILHRQFAGQPGKMLALEMGGNNPMVISDNYGDLDATVYTIIQSAFISAGQRCTCARRLYVPFGEKGDALITKLVEATKNIRMDQPFAEPAPFMGPQISVAAAKFILDAQANLQSLGGESLIEAKAGEAAFVSPGIIDVTNIAELPDEEYFGPLLQVVRYEGLDKAVELANDTRFGLSAGLVSTDDQEWEYFVDHIRAGIVNRNRQLTGASGDAPFGGPGASGNLRPSAYYAADYCAYPMASMEGQETELPATLSPGVTL</sequence>
<protein>
    <recommendedName>
        <fullName evidence="1">N-succinylglutamate 5-semialdehyde dehydrogenase</fullName>
        <ecNumber evidence="1">1.2.1.71</ecNumber>
    </recommendedName>
    <alternativeName>
        <fullName evidence="1">Succinylglutamic semialdehyde dehydrogenase</fullName>
        <shortName evidence="1">SGSD</shortName>
    </alternativeName>
</protein>
<evidence type="ECO:0000255" key="1">
    <source>
        <dbReference type="HAMAP-Rule" id="MF_01174"/>
    </source>
</evidence>
<keyword id="KW-0056">Arginine metabolism</keyword>
<keyword id="KW-0520">NAD</keyword>
<keyword id="KW-0560">Oxidoreductase</keyword>
<accession>Q87L22</accession>
<reference key="1">
    <citation type="journal article" date="2003" name="Lancet">
        <title>Genome sequence of Vibrio parahaemolyticus: a pathogenic mechanism distinct from that of V. cholerae.</title>
        <authorList>
            <person name="Makino K."/>
            <person name="Oshima K."/>
            <person name="Kurokawa K."/>
            <person name="Yokoyama K."/>
            <person name="Uda T."/>
            <person name="Tagomori K."/>
            <person name="Iijima Y."/>
            <person name="Najima M."/>
            <person name="Nakano M."/>
            <person name="Yamashita A."/>
            <person name="Kubota Y."/>
            <person name="Kimura S."/>
            <person name="Yasunaga T."/>
            <person name="Honda T."/>
            <person name="Shinagawa H."/>
            <person name="Hattori M."/>
            <person name="Iida T."/>
        </authorList>
    </citation>
    <scope>NUCLEOTIDE SEQUENCE [LARGE SCALE GENOMIC DNA]</scope>
    <source>
        <strain>RIMD 2210633</strain>
    </source>
</reference>
<feature type="chain" id="PRO_0000262433" description="N-succinylglutamate 5-semialdehyde dehydrogenase">
    <location>
        <begin position="1"/>
        <end position="485"/>
    </location>
</feature>
<feature type="active site" evidence="1">
    <location>
        <position position="243"/>
    </location>
</feature>
<feature type="active site" evidence="1">
    <location>
        <position position="278"/>
    </location>
</feature>
<feature type="binding site" evidence="1">
    <location>
        <begin position="220"/>
        <end position="225"/>
    </location>
    <ligand>
        <name>NAD(+)</name>
        <dbReference type="ChEBI" id="CHEBI:57540"/>
    </ligand>
</feature>
<organism>
    <name type="scientific">Vibrio parahaemolyticus serotype O3:K6 (strain RIMD 2210633)</name>
    <dbReference type="NCBI Taxonomy" id="223926"/>
    <lineage>
        <taxon>Bacteria</taxon>
        <taxon>Pseudomonadati</taxon>
        <taxon>Pseudomonadota</taxon>
        <taxon>Gammaproteobacteria</taxon>
        <taxon>Vibrionales</taxon>
        <taxon>Vibrionaceae</taxon>
        <taxon>Vibrio</taxon>
    </lineage>
</organism>